<comment type="function">
    <text evidence="2">RNA-dependent RNA polymerase which is responsible for replication and transcription of virus RNA segments. The transcription of viral mRNAs occurs by a unique mechanism called cap-snatching. 5' methylated caps of cellular mRNAs are cleaved after 10-13 nucleotides by PA. In turn, these short capped RNAs are used as primers by PB1 for transcription of viral mRNAs. During virus replication, PB1 initiates RNA synthesis and copy vRNA into complementary RNA (cRNA) which in turn serves as a template for the production of more vRNAs.</text>
</comment>
<comment type="catalytic activity">
    <reaction evidence="2">
        <text>RNA(n) + a ribonucleoside 5'-triphosphate = RNA(n+1) + diphosphate</text>
        <dbReference type="Rhea" id="RHEA:21248"/>
        <dbReference type="Rhea" id="RHEA-COMP:14527"/>
        <dbReference type="Rhea" id="RHEA-COMP:17342"/>
        <dbReference type="ChEBI" id="CHEBI:33019"/>
        <dbReference type="ChEBI" id="CHEBI:61557"/>
        <dbReference type="ChEBI" id="CHEBI:140395"/>
        <dbReference type="EC" id="2.7.7.48"/>
    </reaction>
</comment>
<comment type="subunit">
    <text evidence="1 2">Influenza RNA polymerase is composed of three subunits: PB1, PB2 and PA. Interacts (via N-terminus) with PA (via C-terminus). Interacts (via C-terminus) with PB2 (via N-terminus); this interaction is essential for transcription initiation. Interacts (via C-terminus) with human PKP2 (via N-terminus); the interaction competitively inhibits the interaction between the RNA polymerase subunits PB1 and PB2 (By similarity).</text>
</comment>
<comment type="subcellular location">
    <subcellularLocation>
        <location evidence="2">Host nucleus</location>
    </subcellularLocation>
    <subcellularLocation>
        <location evidence="2">Host cytoplasm</location>
    </subcellularLocation>
</comment>
<comment type="PTM">
    <text evidence="2">Phosphorylated by host PRKCA.</text>
</comment>
<comment type="similarity">
    <text evidence="2">Belongs to the influenza viruses polymerase PB1 family.</text>
</comment>
<protein>
    <recommendedName>
        <fullName evidence="2">RNA-directed RNA polymerase catalytic subunit</fullName>
        <ecNumber evidence="2">2.7.7.48</ecNumber>
    </recommendedName>
    <alternativeName>
        <fullName evidence="2">Polymerase basic protein 1</fullName>
        <shortName evidence="2">PB1</shortName>
    </alternativeName>
    <alternativeName>
        <fullName evidence="2">RNA-directed RNA polymerase subunit P1</fullName>
    </alternativeName>
</protein>
<sequence>MDVNPTLLFLKVPAQNAISTTFPYTGDPPYSHGTGTGYTMDTVNRTHQYSERGRWTTNTETGAPQLNPIDGPLPEDNEPSGYAQTDCVLEAMAFLEESHPGIFENSCIETMEVVQQTRVDKLTQGRQTYDWTLNRNQPAATALANTIEVFRSNGLTANESGRLIDFLKDVMESMNKEEMEITTHFQRKRRVRDNMTKKMVTQRTIGKRKQKLNKRSYLIRALTLNTMTKDAERGKLKRRAIATPGMQIRGFVYFVETLARSICEKLEQSGLPVGGNEKKAKLANVVRKMMTNSQDTELSFTITGDNTKWNENQNPRMFLAMITYMTRNQPEWFRNVLSIAPIMFSNKMARLGKGYMFESKSMKLRTQIPAEMLASIDLKYFNGSTRKKIEKIRPLLIEGTASLSPGMMMGMFNMLSTVLGVSILNLGQKRYTKTTYWWDGLQSSDDFALIVNAPNHEGIQAGVDRFYRTCKLLGINMSKKKSYINRTGTFEFTSFFYRYGFVANFSMELPSFGVSGINESADMSIGVTVIKNNMINNDLGPATAQMALQLFIKDYRYTYRCHRGDTQIQTRRSFEIKKLWEQTRSKAGLLVSDGGPNLYNIRNLHIPEVCLKWELMDEDYQGRLCNPLNPFVSHKEIESMNNAVMMPAHGPAKNMEYDAVATTHSWIPKRNRSILNTSQRGILEDEQMYQRCCNLFEXFFPSSSYRRPVGISSMVEAMVSRAQIDARIDFESGRIKKEEFTEIMKICSTIEELRRQK</sequence>
<organism>
    <name type="scientific">Influenza A virus (strain A/USA:Phila/1935 H1N1)</name>
    <dbReference type="NCBI Taxonomy" id="425570"/>
    <lineage>
        <taxon>Viruses</taxon>
        <taxon>Riboviria</taxon>
        <taxon>Orthornavirae</taxon>
        <taxon>Negarnaviricota</taxon>
        <taxon>Polyploviricotina</taxon>
        <taxon>Insthoviricetes</taxon>
        <taxon>Articulavirales</taxon>
        <taxon>Orthomyxoviridae</taxon>
        <taxon>Alphainfluenzavirus</taxon>
        <taxon>Alphainfluenzavirus influenzae</taxon>
        <taxon>Influenza A virus</taxon>
    </lineage>
</organism>
<dbReference type="EC" id="2.7.7.48" evidence="2"/>
<dbReference type="EMBL" id="CY020475">
    <property type="protein sequence ID" value="ABO38392.1"/>
    <property type="molecule type" value="Viral_cRNA"/>
</dbReference>
<dbReference type="Proteomes" id="UP000000829">
    <property type="component" value="Genome"/>
</dbReference>
<dbReference type="GO" id="GO:0030430">
    <property type="term" value="C:host cell cytoplasm"/>
    <property type="evidence" value="ECO:0007669"/>
    <property type="project" value="UniProtKB-SubCell"/>
</dbReference>
<dbReference type="GO" id="GO:0042025">
    <property type="term" value="C:host cell nucleus"/>
    <property type="evidence" value="ECO:0007669"/>
    <property type="project" value="UniProtKB-SubCell"/>
</dbReference>
<dbReference type="GO" id="GO:0000166">
    <property type="term" value="F:nucleotide binding"/>
    <property type="evidence" value="ECO:0007669"/>
    <property type="project" value="UniProtKB-UniRule"/>
</dbReference>
<dbReference type="GO" id="GO:0003723">
    <property type="term" value="F:RNA binding"/>
    <property type="evidence" value="ECO:0007669"/>
    <property type="project" value="InterPro"/>
</dbReference>
<dbReference type="GO" id="GO:0003968">
    <property type="term" value="F:RNA-directed RNA polymerase activity"/>
    <property type="evidence" value="ECO:0007669"/>
    <property type="project" value="UniProtKB-UniRule"/>
</dbReference>
<dbReference type="GO" id="GO:0006351">
    <property type="term" value="P:DNA-templated transcription"/>
    <property type="evidence" value="ECO:0007669"/>
    <property type="project" value="UniProtKB-UniRule"/>
</dbReference>
<dbReference type="GO" id="GO:0039657">
    <property type="term" value="P:symbiont-mediated suppression of host gene expression"/>
    <property type="evidence" value="ECO:0007669"/>
    <property type="project" value="UniProtKB-KW"/>
</dbReference>
<dbReference type="GO" id="GO:0039523">
    <property type="term" value="P:symbiont-mediated suppression of host mRNA transcription via inhibition of RNA polymerase II activity"/>
    <property type="evidence" value="ECO:0007669"/>
    <property type="project" value="UniProtKB-UniRule"/>
</dbReference>
<dbReference type="GO" id="GO:0039694">
    <property type="term" value="P:viral RNA genome replication"/>
    <property type="evidence" value="ECO:0007669"/>
    <property type="project" value="UniProtKB-UniRule"/>
</dbReference>
<dbReference type="GO" id="GO:0019083">
    <property type="term" value="P:viral transcription"/>
    <property type="evidence" value="ECO:0007669"/>
    <property type="project" value="UniProtKB-KW"/>
</dbReference>
<dbReference type="Gene3D" id="6.10.140.720">
    <property type="match status" value="1"/>
</dbReference>
<dbReference type="HAMAP" id="MF_04065">
    <property type="entry name" value="INFV_RDRP"/>
    <property type="match status" value="1"/>
</dbReference>
<dbReference type="InterPro" id="IPR007099">
    <property type="entry name" value="RNA-dir_pol_NSvirus"/>
</dbReference>
<dbReference type="InterPro" id="IPR001407">
    <property type="entry name" value="RNA_pol_PB1_influenza"/>
</dbReference>
<dbReference type="Pfam" id="PF00602">
    <property type="entry name" value="Flu_PB1"/>
    <property type="match status" value="1"/>
</dbReference>
<dbReference type="PIRSF" id="PIRSF000827">
    <property type="entry name" value="RdRPol_OMV"/>
    <property type="match status" value="1"/>
</dbReference>
<dbReference type="PROSITE" id="PS50525">
    <property type="entry name" value="RDRP_SSRNA_NEG_SEG"/>
    <property type="match status" value="1"/>
</dbReference>
<reference key="1">
    <citation type="submission" date="2007-03" db="EMBL/GenBank/DDBJ databases">
        <title>The NIAID influenza genome sequencing project.</title>
        <authorList>
            <person name="Ghedin E."/>
            <person name="Spiro D."/>
            <person name="Miller N."/>
            <person name="Zaborsky J."/>
            <person name="Feldblyum T."/>
            <person name="Subbu V."/>
            <person name="Shumway M."/>
            <person name="Sparenborg J."/>
            <person name="Groveman L."/>
            <person name="Halpin R."/>
            <person name="Sitz J."/>
            <person name="Koo H."/>
            <person name="Salzberg S.L."/>
            <person name="Webster R.G."/>
            <person name="Hoffmann E."/>
            <person name="Krauss S."/>
            <person name="Naeve C."/>
            <person name="Bao Y."/>
            <person name="Bolotov P."/>
            <person name="Dernovoy D."/>
            <person name="Kiryutin B."/>
            <person name="Lipman D.J."/>
            <person name="Tatusova T."/>
        </authorList>
    </citation>
    <scope>NUCLEOTIDE SEQUENCE [GENOMIC RNA]</scope>
</reference>
<reference key="2">
    <citation type="submission" date="2007-03" db="EMBL/GenBank/DDBJ databases">
        <authorList>
            <consortium name="The NIAID Influenza Genome Sequencing Consortium"/>
        </authorList>
    </citation>
    <scope>NUCLEOTIDE SEQUENCE [GENOMIC RNA]</scope>
</reference>
<evidence type="ECO:0000250" key="1">
    <source>
        <dbReference type="UniProtKB" id="P03431"/>
    </source>
</evidence>
<evidence type="ECO:0000255" key="2">
    <source>
        <dbReference type="HAMAP-Rule" id="MF_04065"/>
    </source>
</evidence>
<evidence type="ECO:0000256" key="3">
    <source>
        <dbReference type="SAM" id="MobiDB-lite"/>
    </source>
</evidence>
<accession>A4GCM7</accession>
<keyword id="KW-1262">Eukaryotic host gene expression shutoff by virus</keyword>
<keyword id="KW-1191">Eukaryotic host transcription shutoff by virus</keyword>
<keyword id="KW-1035">Host cytoplasm</keyword>
<keyword id="KW-1190">Host gene expression shutoff by virus</keyword>
<keyword id="KW-1048">Host nucleus</keyword>
<keyword id="KW-0945">Host-virus interaction</keyword>
<keyword id="KW-1104">Inhibition of host RNA polymerase II by virus</keyword>
<keyword id="KW-0547">Nucleotide-binding</keyword>
<keyword id="KW-0548">Nucleotidyltransferase</keyword>
<keyword id="KW-0597">Phosphoprotein</keyword>
<keyword id="KW-0696">RNA-directed RNA polymerase</keyword>
<keyword id="KW-0808">Transferase</keyword>
<keyword id="KW-0693">Viral RNA replication</keyword>
<keyword id="KW-1195">Viral transcription</keyword>
<gene>
    <name evidence="2" type="primary">PB1</name>
</gene>
<feature type="chain" id="PRO_0000373046" description="RNA-directed RNA polymerase catalytic subunit">
    <location>
        <begin position="1"/>
        <end position="757"/>
    </location>
</feature>
<feature type="domain" description="RdRp catalytic" evidence="2">
    <location>
        <begin position="286"/>
        <end position="483"/>
    </location>
</feature>
<feature type="region of interest" description="Disordered" evidence="3">
    <location>
        <begin position="53"/>
        <end position="82"/>
    </location>
</feature>
<feature type="region of interest" description="Promoter-binding site" evidence="2">
    <location>
        <begin position="249"/>
        <end position="256"/>
    </location>
</feature>
<feature type="short sequence motif" description="Nuclear localization signal" evidence="2">
    <location>
        <begin position="187"/>
        <end position="195"/>
    </location>
</feature>
<feature type="short sequence motif" description="Nuclear localization signal" evidence="2">
    <location>
        <begin position="203"/>
        <end position="216"/>
    </location>
</feature>
<feature type="compositionally biased region" description="Polar residues" evidence="3">
    <location>
        <begin position="55"/>
        <end position="64"/>
    </location>
</feature>
<proteinExistence type="inferred from homology"/>
<organismHost>
    <name type="scientific">Aves</name>
    <dbReference type="NCBI Taxonomy" id="8782"/>
</organismHost>
<organismHost>
    <name type="scientific">Homo sapiens</name>
    <name type="common">Human</name>
    <dbReference type="NCBI Taxonomy" id="9606"/>
</organismHost>
<organismHost>
    <name type="scientific">Sus scrofa</name>
    <name type="common">Pig</name>
    <dbReference type="NCBI Taxonomy" id="9823"/>
</organismHost>
<name>RDRP_I35A3</name>